<protein>
    <recommendedName>
        <fullName evidence="1">Cytoskeleton protein RodZ</fullName>
    </recommendedName>
</protein>
<name>RODZ_ECO57</name>
<accession>Q7ABM8</accession>
<accession>Q8XAA6</accession>
<reference key="1">
    <citation type="journal article" date="2001" name="Nature">
        <title>Genome sequence of enterohaemorrhagic Escherichia coli O157:H7.</title>
        <authorList>
            <person name="Perna N.T."/>
            <person name="Plunkett G. III"/>
            <person name="Burland V."/>
            <person name="Mau B."/>
            <person name="Glasner J.D."/>
            <person name="Rose D.J."/>
            <person name="Mayhew G.F."/>
            <person name="Evans P.S."/>
            <person name="Gregor J."/>
            <person name="Kirkpatrick H.A."/>
            <person name="Posfai G."/>
            <person name="Hackett J."/>
            <person name="Klink S."/>
            <person name="Boutin A."/>
            <person name="Shao Y."/>
            <person name="Miller L."/>
            <person name="Grotbeck E.J."/>
            <person name="Davis N.W."/>
            <person name="Lim A."/>
            <person name="Dimalanta E.T."/>
            <person name="Potamousis K."/>
            <person name="Apodaca J."/>
            <person name="Anantharaman T.S."/>
            <person name="Lin J."/>
            <person name="Yen G."/>
            <person name="Schwartz D.C."/>
            <person name="Welch R.A."/>
            <person name="Blattner F.R."/>
        </authorList>
    </citation>
    <scope>NUCLEOTIDE SEQUENCE [LARGE SCALE GENOMIC DNA]</scope>
    <source>
        <strain>O157:H7 / EDL933 / ATCC 700927 / EHEC</strain>
    </source>
</reference>
<reference key="2">
    <citation type="journal article" date="2001" name="DNA Res.">
        <title>Complete genome sequence of enterohemorrhagic Escherichia coli O157:H7 and genomic comparison with a laboratory strain K-12.</title>
        <authorList>
            <person name="Hayashi T."/>
            <person name="Makino K."/>
            <person name="Ohnishi M."/>
            <person name="Kurokawa K."/>
            <person name="Ishii K."/>
            <person name="Yokoyama K."/>
            <person name="Han C.-G."/>
            <person name="Ohtsubo E."/>
            <person name="Nakayama K."/>
            <person name="Murata T."/>
            <person name="Tanaka M."/>
            <person name="Tobe T."/>
            <person name="Iida T."/>
            <person name="Takami H."/>
            <person name="Honda T."/>
            <person name="Sasakawa C."/>
            <person name="Ogasawara N."/>
            <person name="Yasunaga T."/>
            <person name="Kuhara S."/>
            <person name="Shiba T."/>
            <person name="Hattori M."/>
            <person name="Shinagawa H."/>
        </authorList>
    </citation>
    <scope>NUCLEOTIDE SEQUENCE [LARGE SCALE GENOMIC DNA]</scope>
    <source>
        <strain>O157:H7 / Sakai / RIMD 0509952 / EHEC</strain>
    </source>
</reference>
<keyword id="KW-0997">Cell inner membrane</keyword>
<keyword id="KW-1003">Cell membrane</keyword>
<keyword id="KW-0133">Cell shape</keyword>
<keyword id="KW-0238">DNA-binding</keyword>
<keyword id="KW-0472">Membrane</keyword>
<keyword id="KW-1185">Reference proteome</keyword>
<keyword id="KW-0735">Signal-anchor</keyword>
<keyword id="KW-0812">Transmembrane</keyword>
<keyword id="KW-1133">Transmembrane helix</keyword>
<proteinExistence type="inferred from homology"/>
<evidence type="ECO:0000255" key="1">
    <source>
        <dbReference type="HAMAP-Rule" id="MF_02017"/>
    </source>
</evidence>
<evidence type="ECO:0000256" key="2">
    <source>
        <dbReference type="SAM" id="MobiDB-lite"/>
    </source>
</evidence>
<dbReference type="EMBL" id="AE005174">
    <property type="protein sequence ID" value="AAG57626.1"/>
    <property type="molecule type" value="Genomic_DNA"/>
</dbReference>
<dbReference type="EMBL" id="BA000007">
    <property type="protein sequence ID" value="BAB36801.1"/>
    <property type="molecule type" value="Genomic_DNA"/>
</dbReference>
<dbReference type="PIR" id="B91051">
    <property type="entry name" value="B91051"/>
</dbReference>
<dbReference type="PIR" id="F85895">
    <property type="entry name" value="F85895"/>
</dbReference>
<dbReference type="RefSeq" id="NP_311405.1">
    <property type="nucleotide sequence ID" value="NC_002695.1"/>
</dbReference>
<dbReference type="RefSeq" id="WP_001090860.1">
    <property type="nucleotide sequence ID" value="NZ_VOAI01000001.1"/>
</dbReference>
<dbReference type="SMR" id="Q7ABM8"/>
<dbReference type="STRING" id="155864.Z3779"/>
<dbReference type="GeneID" id="915208"/>
<dbReference type="KEGG" id="ece:Z3779"/>
<dbReference type="KEGG" id="ecs:ECs_3378"/>
<dbReference type="PATRIC" id="fig|386585.9.peg.3529"/>
<dbReference type="eggNOG" id="COG1426">
    <property type="taxonomic scope" value="Bacteria"/>
</dbReference>
<dbReference type="HOGENOM" id="CLU_047530_3_1_6"/>
<dbReference type="OMA" id="ADCWTQV"/>
<dbReference type="Proteomes" id="UP000000558">
    <property type="component" value="Chromosome"/>
</dbReference>
<dbReference type="Proteomes" id="UP000002519">
    <property type="component" value="Chromosome"/>
</dbReference>
<dbReference type="GO" id="GO:0005886">
    <property type="term" value="C:plasma membrane"/>
    <property type="evidence" value="ECO:0007669"/>
    <property type="project" value="UniProtKB-SubCell"/>
</dbReference>
<dbReference type="GO" id="GO:0003677">
    <property type="term" value="F:DNA binding"/>
    <property type="evidence" value="ECO:0007669"/>
    <property type="project" value="UniProtKB-KW"/>
</dbReference>
<dbReference type="GO" id="GO:0008360">
    <property type="term" value="P:regulation of cell shape"/>
    <property type="evidence" value="ECO:0007669"/>
    <property type="project" value="UniProtKB-UniRule"/>
</dbReference>
<dbReference type="CDD" id="cd00093">
    <property type="entry name" value="HTH_XRE"/>
    <property type="match status" value="1"/>
</dbReference>
<dbReference type="FunFam" id="1.10.260.40:FF:000014">
    <property type="entry name" value="Cytoskeleton protein RodZ"/>
    <property type="match status" value="1"/>
</dbReference>
<dbReference type="Gene3D" id="1.10.260.40">
    <property type="entry name" value="lambda repressor-like DNA-binding domains"/>
    <property type="match status" value="1"/>
</dbReference>
<dbReference type="HAMAP" id="MF_02017">
    <property type="entry name" value="RodZ"/>
    <property type="match status" value="1"/>
</dbReference>
<dbReference type="InterPro" id="IPR050400">
    <property type="entry name" value="Bact_Cytoskel_RodZ"/>
</dbReference>
<dbReference type="InterPro" id="IPR001387">
    <property type="entry name" value="Cro/C1-type_HTH"/>
</dbReference>
<dbReference type="InterPro" id="IPR010982">
    <property type="entry name" value="Lambda_DNA-bd_dom_sf"/>
</dbReference>
<dbReference type="InterPro" id="IPR023690">
    <property type="entry name" value="RodZ"/>
</dbReference>
<dbReference type="InterPro" id="IPR025194">
    <property type="entry name" value="RodZ-like_C"/>
</dbReference>
<dbReference type="NCBIfam" id="NF008109">
    <property type="entry name" value="PRK10856.1"/>
    <property type="match status" value="1"/>
</dbReference>
<dbReference type="PANTHER" id="PTHR34475">
    <property type="match status" value="1"/>
</dbReference>
<dbReference type="PANTHER" id="PTHR34475:SF1">
    <property type="entry name" value="CYTOSKELETON PROTEIN RODZ"/>
    <property type="match status" value="1"/>
</dbReference>
<dbReference type="Pfam" id="PF13413">
    <property type="entry name" value="HTH_25"/>
    <property type="match status" value="1"/>
</dbReference>
<dbReference type="Pfam" id="PF13464">
    <property type="entry name" value="RodZ_C"/>
    <property type="match status" value="1"/>
</dbReference>
<dbReference type="SMART" id="SM00530">
    <property type="entry name" value="HTH_XRE"/>
    <property type="match status" value="1"/>
</dbReference>
<dbReference type="SUPFAM" id="SSF47413">
    <property type="entry name" value="lambda repressor-like DNA-binding domains"/>
    <property type="match status" value="1"/>
</dbReference>
<dbReference type="PROSITE" id="PS50943">
    <property type="entry name" value="HTH_CROC1"/>
    <property type="match status" value="1"/>
</dbReference>
<gene>
    <name evidence="1" type="primary">rodZ</name>
    <name type="ordered locus">Z3779</name>
    <name type="ordered locus">ECs3378</name>
</gene>
<comment type="function">
    <text evidence="1">Cytoskeletal protein that is involved in cell-shape control through regulation of the length of the long axis.</text>
</comment>
<comment type="subcellular location">
    <subcellularLocation>
        <location evidence="1">Cell inner membrane</location>
        <topology evidence="1">Single-pass type II membrane protein</topology>
    </subcellularLocation>
    <text evidence="1">Forms helical filaments along the long axis of the cell.</text>
</comment>
<comment type="domain">
    <text evidence="1">The helix-turn-helix (HTH) motif in the cytoplasmic domain of the N-terminus is involved in the formation of spirals to maintain the rigid rod shape. As this protein is anchored in the cytoplasmic membrane, the HTH motif may contribute to protein-protein interactions to form the RodZ helix, which is localized beneath the cytoplasmic membrane. The C-terminal domain may be critical for determination of the rod shape by probably interacting with enzymes required for synthesis of the peptidoglycan layer, including PBPs in the periplasm.</text>
</comment>
<comment type="similarity">
    <text evidence="1">Belongs to the RodZ family.</text>
</comment>
<feature type="chain" id="PRO_0000361839" description="Cytoskeleton protein RodZ">
    <location>
        <begin position="1"/>
        <end position="337"/>
    </location>
</feature>
<feature type="topological domain" description="Cytoplasmic" evidence="1">
    <location>
        <begin position="1"/>
        <end position="111"/>
    </location>
</feature>
<feature type="transmembrane region" description="Helical; Signal-anchor for type II membrane protein" evidence="1">
    <location>
        <begin position="112"/>
        <end position="132"/>
    </location>
</feature>
<feature type="topological domain" description="Periplasmic" evidence="1">
    <location>
        <begin position="133"/>
        <end position="337"/>
    </location>
</feature>
<feature type="domain" description="HTH cro/C1-type" evidence="1">
    <location>
        <begin position="19"/>
        <end position="71"/>
    </location>
</feature>
<feature type="DNA-binding region" description="H-T-H motif" evidence="1">
    <location>
        <begin position="30"/>
        <end position="49"/>
    </location>
</feature>
<feature type="region of interest" description="Disordered" evidence="2">
    <location>
        <begin position="145"/>
        <end position="236"/>
    </location>
</feature>
<feature type="compositionally biased region" description="Polar residues" evidence="2">
    <location>
        <begin position="145"/>
        <end position="167"/>
    </location>
</feature>
<feature type="compositionally biased region" description="Low complexity" evidence="2">
    <location>
        <begin position="168"/>
        <end position="207"/>
    </location>
</feature>
<feature type="compositionally biased region" description="Polar residues" evidence="2">
    <location>
        <begin position="208"/>
        <end position="218"/>
    </location>
</feature>
<feature type="compositionally biased region" description="Low complexity" evidence="2">
    <location>
        <begin position="219"/>
        <end position="236"/>
    </location>
</feature>
<sequence>MNTEATHDQNEALTTGARLRNAREQLGLSQQAVAERLCLKVSTVRDIEEDKAPADLASTFLRGYIRSYARLVHIPEEELLPGLEKQAPLRAAKVAPMQSFSLGKRRKKRDGWLMTFTWLVLFVVIGLSGAWWWQDHKAQQEEITTMADQSSAELSSNSEQGQSVPLNTSTTTDPATTSTPPASVDTTATNTQTPVVTAPAPAVDPQQNAVVSPSQANVDTAATPAPTAATTPDGAAPLPTDQAGVTTPVADPNALVMNFTADCWLEVTDATGKKLFSGMQRKDGNLNLTGQAPYKLKIGAPAAVQIQYQGKPVDLSRFIRTNQVARLTLNAEQSPAQ</sequence>
<organism>
    <name type="scientific">Escherichia coli O157:H7</name>
    <dbReference type="NCBI Taxonomy" id="83334"/>
    <lineage>
        <taxon>Bacteria</taxon>
        <taxon>Pseudomonadati</taxon>
        <taxon>Pseudomonadota</taxon>
        <taxon>Gammaproteobacteria</taxon>
        <taxon>Enterobacterales</taxon>
        <taxon>Enterobacteriaceae</taxon>
        <taxon>Escherichia</taxon>
    </lineage>
</organism>